<dbReference type="EC" id="1.4.3.11" evidence="1 3 5"/>
<dbReference type="EMBL" id="AB085623">
    <property type="protein sequence ID" value="BAB93449.1"/>
    <property type="molecule type" value="Genomic_DNA"/>
</dbReference>
<dbReference type="PDB" id="2E1M">
    <property type="method" value="X-ray"/>
    <property type="resolution" value="2.80 A"/>
    <property type="chains" value="A=15-390, B=391-520, C=521-701"/>
</dbReference>
<dbReference type="PDB" id="7E0C">
    <property type="method" value="X-ray"/>
    <property type="resolution" value="2.65 A"/>
    <property type="chains" value="A=16-701"/>
</dbReference>
<dbReference type="PDB" id="7E0D">
    <property type="method" value="X-ray"/>
    <property type="resolution" value="2.70 A"/>
    <property type="chains" value="A=16-701"/>
</dbReference>
<dbReference type="PDBsum" id="2E1M"/>
<dbReference type="PDBsum" id="7E0C"/>
<dbReference type="PDBsum" id="7E0D"/>
<dbReference type="SMR" id="Q8L3C7"/>
<dbReference type="MINT" id="Q8L3C7"/>
<dbReference type="BRENDA" id="1.4.3.11">
    <property type="organism ID" value="1284"/>
</dbReference>
<dbReference type="EvolutionaryTrace" id="Q8L3C7"/>
<dbReference type="GO" id="GO:0005576">
    <property type="term" value="C:extracellular region"/>
    <property type="evidence" value="ECO:0007669"/>
    <property type="project" value="UniProtKB-SubCell"/>
</dbReference>
<dbReference type="GO" id="GO:0001716">
    <property type="term" value="F:L-amino-acid oxidase activity"/>
    <property type="evidence" value="ECO:0007669"/>
    <property type="project" value="TreeGrafter"/>
</dbReference>
<dbReference type="GO" id="GO:0000166">
    <property type="term" value="F:nucleotide binding"/>
    <property type="evidence" value="ECO:0007669"/>
    <property type="project" value="UniProtKB-KW"/>
</dbReference>
<dbReference type="GO" id="GO:0009063">
    <property type="term" value="P:amino acid catabolic process"/>
    <property type="evidence" value="ECO:0007669"/>
    <property type="project" value="TreeGrafter"/>
</dbReference>
<dbReference type="Gene3D" id="1.10.10.1620">
    <property type="match status" value="1"/>
</dbReference>
<dbReference type="Gene3D" id="1.10.10.1790">
    <property type="match status" value="1"/>
</dbReference>
<dbReference type="Gene3D" id="3.30.1490.470">
    <property type="match status" value="1"/>
</dbReference>
<dbReference type="Gene3D" id="3.30.160.490">
    <property type="match status" value="1"/>
</dbReference>
<dbReference type="Gene3D" id="3.30.70.2100">
    <property type="match status" value="1"/>
</dbReference>
<dbReference type="Gene3D" id="6.10.140.1210">
    <property type="match status" value="1"/>
</dbReference>
<dbReference type="Gene3D" id="6.10.250.1500">
    <property type="match status" value="1"/>
</dbReference>
<dbReference type="Gene3D" id="3.50.50.60">
    <property type="entry name" value="FAD/NAD(P)-binding domain"/>
    <property type="match status" value="1"/>
</dbReference>
<dbReference type="Gene3D" id="1.10.405.10">
    <property type="entry name" value="Guanine Nucleotide Dissociation Inhibitor, domain 1"/>
    <property type="match status" value="1"/>
</dbReference>
<dbReference type="InterPro" id="IPR002937">
    <property type="entry name" value="Amino_oxidase"/>
</dbReference>
<dbReference type="InterPro" id="IPR036188">
    <property type="entry name" value="FAD/NAD-bd_sf"/>
</dbReference>
<dbReference type="InterPro" id="IPR050281">
    <property type="entry name" value="Flavin_monoamine_oxidase"/>
</dbReference>
<dbReference type="PANTHER" id="PTHR10742:SF342">
    <property type="entry name" value="AMINE OXIDASE"/>
    <property type="match status" value="1"/>
</dbReference>
<dbReference type="PANTHER" id="PTHR10742">
    <property type="entry name" value="FLAVIN MONOAMINE OXIDASE"/>
    <property type="match status" value="1"/>
</dbReference>
<dbReference type="Pfam" id="PF01593">
    <property type="entry name" value="Amino_oxidase"/>
    <property type="match status" value="2"/>
</dbReference>
<dbReference type="SUPFAM" id="SSF54373">
    <property type="entry name" value="FAD-linked reductases, C-terminal domain"/>
    <property type="match status" value="1"/>
</dbReference>
<dbReference type="SUPFAM" id="SSF51905">
    <property type="entry name" value="FAD/NAD(P)-binding domain"/>
    <property type="match status" value="1"/>
</dbReference>
<name>LGOX_STRSQ</name>
<gene>
    <name evidence="6" type="primary">lgoX</name>
</gene>
<feature type="signal peptide" evidence="10">
    <location>
        <begin position="1"/>
        <end position="14"/>
    </location>
</feature>
<feature type="chain" id="PRO_0000457963" description="L-glutamate oxidase precursor">
    <location>
        <begin position="15"/>
        <end position="701"/>
    </location>
</feature>
<feature type="chain" id="PRO_0000457964" description="L-glutamate oxidase alpha chain" evidence="10">
    <location>
        <begin position="15"/>
        <end position="390"/>
    </location>
</feature>
<feature type="chain" id="PRO_0000457965" description="L-glutamate oxidase gamma chain" evidence="10">
    <location>
        <begin position="391"/>
        <end position="480"/>
    </location>
</feature>
<feature type="propeptide" id="PRO_0000457966" evidence="10">
    <location>
        <begin position="481"/>
        <end position="520"/>
    </location>
</feature>
<feature type="chain" id="PRO_0000457967" description="L-glutamate oxidase beta chain" evidence="10">
    <location>
        <begin position="521"/>
        <end position="683"/>
    </location>
</feature>
<feature type="propeptide" id="PRO_0000457968" evidence="10">
    <location>
        <begin position="684"/>
        <end position="701"/>
    </location>
</feature>
<feature type="binding site" evidence="2 4 11 12 13">
    <location>
        <position position="69"/>
    </location>
    <ligand>
        <name>FAD</name>
        <dbReference type="ChEBI" id="CHEBI:57692"/>
    </ligand>
</feature>
<feature type="binding site" evidence="2 4 11 12 13">
    <location>
        <position position="88"/>
    </location>
    <ligand>
        <name>FAD</name>
        <dbReference type="ChEBI" id="CHEBI:57692"/>
    </ligand>
</feature>
<feature type="binding site" evidence="4 12 13">
    <location>
        <position position="89"/>
    </location>
    <ligand>
        <name>FAD</name>
        <dbReference type="ChEBI" id="CHEBI:57692"/>
    </ligand>
</feature>
<feature type="binding site" evidence="2 4 11 12 13">
    <location>
        <position position="97"/>
    </location>
    <ligand>
        <name>FAD</name>
        <dbReference type="ChEBI" id="CHEBI:57692"/>
    </ligand>
</feature>
<feature type="binding site" evidence="2 4 11 12 13">
    <location>
        <position position="123"/>
    </location>
    <ligand>
        <name>FAD</name>
        <dbReference type="ChEBI" id="CHEBI:57692"/>
    </ligand>
</feature>
<feature type="binding site" evidence="2 4 11 12 13">
    <location>
        <position position="124"/>
    </location>
    <ligand>
        <name>FAD</name>
        <dbReference type="ChEBI" id="CHEBI:57692"/>
    </ligand>
</feature>
<feature type="binding site" evidence="2 4 11 12 13">
    <location>
        <position position="354"/>
    </location>
    <ligand>
        <name>FAD</name>
        <dbReference type="ChEBI" id="CHEBI:57692"/>
    </ligand>
</feature>
<feature type="binding site" evidence="2 4 11 12 13">
    <location>
        <position position="409"/>
    </location>
    <ligand>
        <name>FAD</name>
        <dbReference type="ChEBI" id="CHEBI:57692"/>
    </ligand>
</feature>
<feature type="binding site" evidence="2 4 11 12 13">
    <location>
        <position position="645"/>
    </location>
    <ligand>
        <name>FAD</name>
        <dbReference type="ChEBI" id="CHEBI:57692"/>
    </ligand>
</feature>
<feature type="binding site" evidence="2 4 11 12 13">
    <location>
        <position position="653"/>
    </location>
    <ligand>
        <name>FAD</name>
        <dbReference type="ChEBI" id="CHEBI:57692"/>
    </ligand>
</feature>
<feature type="binding site" evidence="2 4 11 12 13">
    <location>
        <position position="654"/>
    </location>
    <ligand>
        <name>FAD</name>
        <dbReference type="ChEBI" id="CHEBI:57692"/>
    </ligand>
</feature>
<feature type="site" description="Important for substrate specificity" evidence="3 4">
    <location>
        <position position="305"/>
    </location>
</feature>
<feature type="mutagenesis site" description="20-fold decrease in L-glutamate oxidation. Changes substrate specificity, the mutant can use L-histidine, L-phenylalanine and L-leucine." evidence="3">
    <original>R</original>
    <variation>A</variation>
    <location>
        <position position="305"/>
    </location>
</feature>
<feature type="mutagenesis site" description="Strong decrease in L-glutamate oxidation. Changes substrate specificity, the mutant can use L-arginine, L-histidine, L-phenylalanine and L-leucine." evidence="3">
    <original>R</original>
    <variation>D</variation>
    <location>
        <position position="305"/>
    </location>
</feature>
<feature type="mutagenesis site" description="Exhibits strict specificity for L-arginine." evidence="4">
    <original>R</original>
    <variation>E</variation>
    <location>
        <position position="305"/>
    </location>
</feature>
<feature type="mutagenesis site" description="Strong decrease in L-glutamate oxidation. Changes substrate specificity, the mutant can use L-histidine, L-phenylalanine and L-leucine." evidence="3">
    <original>R</original>
    <variation>K</variation>
    <location>
        <position position="305"/>
    </location>
</feature>
<feature type="mutagenesis site" description="Strong decrease in L-glutamate oxidation. Changes substrate specificity, the mutant can use L-histidine, L-phenylalanine, L-leucine and L-asparagine." evidence="3">
    <original>R</original>
    <variation>L</variation>
    <location>
        <position position="305"/>
    </location>
</feature>
<feature type="mutagenesis site" description="Strong decrease in L-glutamate oxidation. Has little influence on substrate specificity." evidence="3">
    <original>H</original>
    <variation>A</variation>
    <location>
        <position position="312"/>
    </location>
</feature>
<feature type="mutagenesis site" description="Strong decrease in L-glutamate oxidation. Has little influence on substrate specificity." evidence="3">
    <original>W</original>
    <variation>A</variation>
    <location>
        <position position="564"/>
    </location>
</feature>
<feature type="helix" evidence="14">
    <location>
        <begin position="18"/>
        <end position="28"/>
    </location>
</feature>
<feature type="turn" evidence="14">
    <location>
        <begin position="33"/>
        <end position="35"/>
    </location>
</feature>
<feature type="helix" evidence="14">
    <location>
        <begin position="39"/>
        <end position="48"/>
    </location>
</feature>
<feature type="strand" evidence="15">
    <location>
        <begin position="52"/>
        <end position="54"/>
    </location>
</feature>
<feature type="strand" evidence="14">
    <location>
        <begin position="60"/>
        <end position="64"/>
    </location>
</feature>
<feature type="helix" evidence="14">
    <location>
        <begin position="68"/>
        <end position="79"/>
    </location>
</feature>
<feature type="strand" evidence="14">
    <location>
        <begin position="83"/>
        <end position="89"/>
    </location>
</feature>
<feature type="strand" evidence="14">
    <location>
        <begin position="105"/>
        <end position="107"/>
    </location>
</feature>
<feature type="strand" evidence="14">
    <location>
        <begin position="110"/>
        <end position="113"/>
    </location>
</feature>
<feature type="strand" evidence="14">
    <location>
        <begin position="118"/>
        <end position="121"/>
    </location>
</feature>
<feature type="helix" evidence="14">
    <location>
        <begin position="130"/>
        <end position="138"/>
    </location>
</feature>
<feature type="strand" evidence="14">
    <location>
        <begin position="143"/>
        <end position="146"/>
    </location>
</feature>
<feature type="strand" evidence="14">
    <location>
        <begin position="155"/>
        <end position="157"/>
    </location>
</feature>
<feature type="strand" evidence="14">
    <location>
        <begin position="166"/>
        <end position="168"/>
    </location>
</feature>
<feature type="strand" evidence="14">
    <location>
        <begin position="170"/>
        <end position="173"/>
    </location>
</feature>
<feature type="strand" evidence="14">
    <location>
        <begin position="175"/>
        <end position="179"/>
    </location>
</feature>
<feature type="strand" evidence="14">
    <location>
        <begin position="195"/>
        <end position="198"/>
    </location>
</feature>
<feature type="strand" evidence="14">
    <location>
        <begin position="201"/>
        <end position="204"/>
    </location>
</feature>
<feature type="helix" evidence="14">
    <location>
        <begin position="205"/>
        <end position="210"/>
    </location>
</feature>
<feature type="helix" evidence="14">
    <location>
        <begin position="213"/>
        <end position="216"/>
    </location>
</feature>
<feature type="helix" evidence="14">
    <location>
        <begin position="217"/>
        <end position="219"/>
    </location>
</feature>
<feature type="helix" evidence="14">
    <location>
        <begin position="223"/>
        <end position="227"/>
    </location>
</feature>
<feature type="helix" evidence="14">
    <location>
        <begin position="230"/>
        <end position="242"/>
    </location>
</feature>
<feature type="turn" evidence="14">
    <location>
        <begin position="243"/>
        <end position="245"/>
    </location>
</feature>
<feature type="strand" evidence="14">
    <location>
        <begin position="246"/>
        <end position="248"/>
    </location>
</feature>
<feature type="strand" evidence="14">
    <location>
        <begin position="250"/>
        <end position="252"/>
    </location>
</feature>
<feature type="strand" evidence="14">
    <location>
        <begin position="254"/>
        <end position="256"/>
    </location>
</feature>
<feature type="helix" evidence="14">
    <location>
        <begin position="259"/>
        <end position="273"/>
    </location>
</feature>
<feature type="helix" evidence="14">
    <location>
        <begin position="278"/>
        <end position="284"/>
    </location>
</feature>
<feature type="helix" evidence="14">
    <location>
        <begin position="290"/>
        <end position="299"/>
    </location>
</feature>
<feature type="turn" evidence="14">
    <location>
        <begin position="303"/>
        <end position="306"/>
    </location>
</feature>
<feature type="strand" evidence="14">
    <location>
        <begin position="307"/>
        <end position="309"/>
    </location>
</feature>
<feature type="helix" evidence="14">
    <location>
        <begin position="310"/>
        <end position="315"/>
    </location>
</feature>
<feature type="strand" evidence="14">
    <location>
        <begin position="316"/>
        <end position="318"/>
    </location>
</feature>
<feature type="strand" evidence="14">
    <location>
        <begin position="326"/>
        <end position="329"/>
    </location>
</feature>
<feature type="helix" evidence="14">
    <location>
        <begin position="335"/>
        <end position="342"/>
    </location>
</feature>
<feature type="turn" evidence="14">
    <location>
        <begin position="343"/>
        <end position="347"/>
    </location>
</feature>
<feature type="strand" evidence="14">
    <location>
        <begin position="348"/>
        <end position="359"/>
    </location>
</feature>
<feature type="strand" evidence="14">
    <location>
        <begin position="374"/>
        <end position="376"/>
    </location>
</feature>
<feature type="strand" evidence="14">
    <location>
        <begin position="378"/>
        <end position="385"/>
    </location>
</feature>
<feature type="strand" evidence="14">
    <location>
        <begin position="394"/>
        <end position="403"/>
    </location>
</feature>
<feature type="helix" evidence="14">
    <location>
        <begin position="407"/>
        <end position="410"/>
    </location>
</feature>
<feature type="strand" evidence="14">
    <location>
        <begin position="413"/>
        <end position="417"/>
    </location>
</feature>
<feature type="helix" evidence="14">
    <location>
        <begin position="421"/>
        <end position="429"/>
    </location>
</feature>
<feature type="strand" evidence="14">
    <location>
        <begin position="435"/>
        <end position="444"/>
    </location>
</feature>
<feature type="helix" evidence="14">
    <location>
        <begin position="446"/>
        <end position="448"/>
    </location>
</feature>
<feature type="helix" evidence="14">
    <location>
        <begin position="451"/>
        <end position="459"/>
    </location>
</feature>
<feature type="helix" evidence="14">
    <location>
        <begin position="465"/>
        <end position="469"/>
    </location>
</feature>
<feature type="strand" evidence="14">
    <location>
        <begin position="533"/>
        <end position="538"/>
    </location>
</feature>
<feature type="strand" evidence="14">
    <location>
        <begin position="541"/>
        <end position="544"/>
    </location>
</feature>
<feature type="strand" evidence="14">
    <location>
        <begin position="556"/>
        <end position="564"/>
    </location>
</feature>
<feature type="helix" evidence="14">
    <location>
        <begin position="565"/>
        <end position="572"/>
    </location>
</feature>
<feature type="helix" evidence="14">
    <location>
        <begin position="576"/>
        <end position="591"/>
    </location>
</feature>
<feature type="helix" evidence="14">
    <location>
        <begin position="593"/>
        <end position="598"/>
    </location>
</feature>
<feature type="strand" evidence="14">
    <location>
        <begin position="599"/>
        <end position="607"/>
    </location>
</feature>
<feature type="turn" evidence="14">
    <location>
        <begin position="608"/>
        <end position="610"/>
    </location>
</feature>
<feature type="turn" evidence="14">
    <location>
        <begin position="612"/>
        <end position="614"/>
    </location>
</feature>
<feature type="strand" evidence="14">
    <location>
        <begin position="615"/>
        <end position="620"/>
    </location>
</feature>
<feature type="helix" evidence="14">
    <location>
        <begin position="625"/>
        <end position="634"/>
    </location>
</feature>
<feature type="strand" evidence="14">
    <location>
        <begin position="640"/>
        <end position="642"/>
    </location>
</feature>
<feature type="helix" evidence="14">
    <location>
        <begin position="645"/>
        <end position="647"/>
    </location>
</feature>
<feature type="strand" evidence="14">
    <location>
        <begin position="648"/>
        <end position="650"/>
    </location>
</feature>
<feature type="helix" evidence="14">
    <location>
        <begin position="654"/>
        <end position="670"/>
    </location>
</feature>
<protein>
    <recommendedName>
        <fullName evidence="7">L-glutamate oxidase precursor</fullName>
        <shortName evidence="6">LGOX</shortName>
        <ecNumber evidence="1 3 5">1.4.3.11</ecNumber>
    </recommendedName>
    <component>
        <recommendedName>
            <fullName evidence="10">L-glutamate oxidase alpha chain</fullName>
        </recommendedName>
    </component>
    <component>
        <recommendedName>
            <fullName evidence="10">L-glutamate oxidase gamma chain</fullName>
        </recommendedName>
    </component>
    <component>
        <recommendedName>
            <fullName evidence="10">L-glutamate oxidase beta chain</fullName>
        </recommendedName>
    </component>
</protein>
<organism>
    <name type="scientific">Streptomyces sp</name>
    <dbReference type="NCBI Taxonomy" id="1931"/>
    <lineage>
        <taxon>Bacteria</taxon>
        <taxon>Bacillati</taxon>
        <taxon>Actinomycetota</taxon>
        <taxon>Actinomycetes</taxon>
        <taxon>Kitasatosporales</taxon>
        <taxon>Streptomycetaceae</taxon>
        <taxon>Streptomyces</taxon>
    </lineage>
</organism>
<sequence length="701" mass="77891">MTTDTARRHTGAERANEMTYEQLARELLLVGPAPTNEDLKLRYLDVLIDNGLNPPGPPKRILIVGAGIAGLVAGDLLTRAGHDVTILEANANRVGGRIKTFHAKKGEPSPFADPAQYAEAGAMRLPSFHPLTLALIDKLGLKRRLFFNVDIDPQTGNQDAPVPPVFYKSFKDGKTWTNGAPSPEFKEPDKRNHTWIRTNREQVRRAQYATDPSSINEGFHLTGCETRLTVSDMVNQALEPVRDYYSVKQDDGTRVNKPFKEWLAGWADVVRDFDGYSMGRFLREYAEFSDEAVEAIGTIENMTSRLHLAFFHSFLGRSDIDPRATYWEIEGGSRMLPETLAKDLRDQIVMGQRMVRLEYYDPGRDGHHGELTGPGGPAVAIQTVPEGEPYAATQTWTGDLAIVTIPFSSLRFVKVTPPFSYKKRRAVIETHYDQATKVLLEFSRRWWEFTEADWKRELDAIAPGLYDYYQQWGEDDAEAALALPQSVRNLPTGLLGAHPSVDESRIGEEQVEYYRNSELRGGVRPATNAYGGGSTTDNPNRFMYYPSHPVPGTQGGVVLAAYSWSDDAARWDSFDDAERYGYALENLQSVHGRRIEVFYTGAGQTQSWLRDPYACGEAAVYTPHQMTAFHLDVVRPEGPVYFAGEHVSLKHAWIEGAVETAVRAAIAVNEAPVGDTGVTAAAGRRGAAAATEPMREEALTS</sequence>
<keyword id="KW-0002">3D-structure</keyword>
<keyword id="KW-0903">Direct protein sequencing</keyword>
<keyword id="KW-0274">FAD</keyword>
<keyword id="KW-0285">Flavoprotein</keyword>
<keyword id="KW-0547">Nucleotide-binding</keyword>
<keyword id="KW-0560">Oxidoreductase</keyword>
<keyword id="KW-0964">Secreted</keyword>
<keyword id="KW-0732">Signal</keyword>
<keyword id="KW-0865">Zymogen</keyword>
<accession>Q8L3C7</accession>
<proteinExistence type="evidence at protein level"/>
<evidence type="ECO:0000269" key="1">
    <source>
    </source>
</evidence>
<evidence type="ECO:0000269" key="2">
    <source>
    </source>
</evidence>
<evidence type="ECO:0000269" key="3">
    <source>
    </source>
</evidence>
<evidence type="ECO:0000269" key="4">
    <source>
    </source>
</evidence>
<evidence type="ECO:0000269" key="5">
    <source ref="2"/>
</evidence>
<evidence type="ECO:0000303" key="6">
    <source>
    </source>
</evidence>
<evidence type="ECO:0000303" key="7">
    <source ref="2"/>
</evidence>
<evidence type="ECO:0000305" key="8"/>
<evidence type="ECO:0000305" key="9">
    <source>
    </source>
</evidence>
<evidence type="ECO:0000305" key="10">
    <source>
    </source>
</evidence>
<evidence type="ECO:0007744" key="11">
    <source>
        <dbReference type="PDB" id="2E1M"/>
    </source>
</evidence>
<evidence type="ECO:0007744" key="12">
    <source>
        <dbReference type="PDB" id="7E0C"/>
    </source>
</evidence>
<evidence type="ECO:0007744" key="13">
    <source>
        <dbReference type="PDB" id="7E0D"/>
    </source>
</evidence>
<evidence type="ECO:0007829" key="14">
    <source>
        <dbReference type="PDB" id="7E0C"/>
    </source>
</evidence>
<evidence type="ECO:0007829" key="15">
    <source>
        <dbReference type="PDB" id="7E0D"/>
    </source>
</evidence>
<comment type="function">
    <text evidence="1 3 5">Catalyzes the oxidative deamination of L-glutamate to 2-ketoglutarate along with the production of ammonia and hydrogen peroxide (PubMed:14769868, PubMed:22197816, Ref.2). Shows strict substrate specificity for L-glutamate, and exhibits only very weak activity with L-aspartate (Ref.2).</text>
</comment>
<comment type="catalytic activity">
    <reaction evidence="1 3 5">
        <text>L-glutamate + O2 + H2O = H2O2 + 2-oxoglutarate + NH4(+)</text>
        <dbReference type="Rhea" id="RHEA:20728"/>
        <dbReference type="ChEBI" id="CHEBI:15377"/>
        <dbReference type="ChEBI" id="CHEBI:15379"/>
        <dbReference type="ChEBI" id="CHEBI:16240"/>
        <dbReference type="ChEBI" id="CHEBI:16810"/>
        <dbReference type="ChEBI" id="CHEBI:28938"/>
        <dbReference type="ChEBI" id="CHEBI:29985"/>
        <dbReference type="EC" id="1.4.3.11"/>
    </reaction>
</comment>
<comment type="cofactor">
    <cofactor evidence="2 5">
        <name>FAD</name>
        <dbReference type="ChEBI" id="CHEBI:57692"/>
    </cofactor>
</comment>
<comment type="activity regulation">
    <text evidence="1 5">Produced as a single polypeptide precursor and is activated by proteolytic cleavage (PubMed:14769868). The LGOX precursor is an active enzyme, but it exhibits lower catalytic efficiency and lower thermostability compared with the mature hexameric LGOX (PubMed:14769868). The mature form is strongly inhibited by p-chloromercuribenzoate, but not by CuCl(2), EDTA and diethyldithiocarbamate (Ref.2).</text>
</comment>
<comment type="biophysicochemical properties">
    <kinetics>
        <KM evidence="5">0.21 mM for L-glutamate (mature LGOX)</KM>
        <KM evidence="3">0.173 mM for L-glutamate (mature LGOX)</KM>
        <KM evidence="1">0.23 mM for L-glutamate (at pH 6.0 for recombinant LGOX expressed in E.coli)</KM>
        <KM evidence="1">5 mM for L-glutamate (at pH 7.4 for recombinant LGOX expressed in E.coli)</KM>
        <KM evidence="5">29 mM for L-aspartate (mature LGOX)</KM>
        <text evidence="3">kcat is 53.2 sec(-1) for mature LGOX.</text>
    </kinetics>
    <phDependence>
        <text evidence="1 5">Optimum pH is 7.0-8.0 for mature LGOX (Ref.2). Optimum pH is 7.0 for recombinant LGOX expressed in E.coli (PubMed:14769868).</text>
    </phDependence>
    <temperatureDependence>
        <text evidence="1">Optimum temperature is 35 degrees Celsius at pH 7.4 and 50 degrees Celsius at pH 6.0 for recombinant LGOX expressed in E.coli.</text>
    </temperatureDependence>
</comment>
<comment type="subunit">
    <text evidence="1 2 5">The LGOX precursor forms homodimers (PubMed:14769868). The mature enzyme is a heterohexamer composed of 2 alpha chains, 2 beta chains and 2 gamma chains (alpha2beta2gamma2) (PubMed:14769868, PubMed:19531050, Ref.2).</text>
</comment>
<comment type="subcellular location">
    <subcellularLocation>
        <location evidence="9">Secreted</location>
    </subcellularLocation>
</comment>
<comment type="domain">
    <text evidence="2">Contains a deeply buried active site and two entrances from the surface of the protein into the active site.</text>
</comment>
<comment type="PTM">
    <text evidence="1 2 5 9">The precursor form is proteolytically cleaved by an endopeptidase into alpha, beta and gamma chains, which form the stable mature enzyme (PubMed:14769868, PubMed:19531050, Ref.2). Activation by proteolysis occurs after secretion (Probable).</text>
</comment>
<comment type="biotechnology">
    <text evidence="4">LGOX has been used as a biosensor to quantify L-glutamate and been applied in quality management of foods and fermentation processes, and can also be used in biosensors for clinical testing apparatus. The alternation of substrate specificity expands the application range of LGOX in industrial, medical and pharmaceutical fields. The LGOX R305E mutant is suitable for the determination of L-arginine.</text>
</comment>
<comment type="similarity">
    <text evidence="8">Belongs to the flavin monoamine oxidase family. LGOX subfamily.</text>
</comment>
<reference key="1">
    <citation type="journal article" date="2003" name="J. Biochem.">
        <title>Recombinant expression, biochemical characterization and stabilization through proteolysis of an L-glutamate oxidase from Streptomyces sp. X-119-6.</title>
        <authorList>
            <person name="Arima J."/>
            <person name="Tamura T."/>
            <person name="Kusakabe H."/>
            <person name="Ashiuchi M."/>
            <person name="Yagi T."/>
            <person name="Tanaka H."/>
            <person name="Inagaki K."/>
        </authorList>
    </citation>
    <scope>NUCLEOTIDE SEQUENCE [GENOMIC DNA]</scope>
    <scope>PROTEIN SEQUENCE OF 15-33; 395-407 AND 523-533</scope>
    <scope>FUNCTION</scope>
    <scope>CATALYTIC ACTIVITY</scope>
    <scope>ACTIVITY REGULATION</scope>
    <scope>BIOPHYSICOCHEMICAL PROPERTIES</scope>
    <scope>SUBUNIT</scope>
    <scope>PROTEOLYTIC CLEAVAGE</scope>
    <source>
        <strain>X-119-6</strain>
    </source>
</reference>
<reference key="2">
    <citation type="journal article" date="1983" name="Agric. Biol. Chem.">
        <title>Purification and properties of a new enzyme, L-glutamate oxidase, from Streptomyces sp. X-119-6 grown on wheat bran.</title>
        <authorList>
            <person name="Kusakabe H."/>
            <person name="Midorikawa Y."/>
            <person name="Fujishima T."/>
            <person name="Kuninaka A."/>
            <person name="Yoshino H."/>
        </authorList>
    </citation>
    <scope>FUNCTION</scope>
    <scope>CATALYTIC ACTIVITY</scope>
    <scope>COFACTOR</scope>
    <scope>ACTIVITY REGULATION</scope>
    <scope>BIOPHYSICOCHEMICAL PROPERTIES</scope>
    <scope>SUBUNIT</scope>
    <scope>PROTEOLYTIC CLEAVAGE</scope>
    <source>
        <strain>X-119-6</strain>
    </source>
</reference>
<reference key="3">
    <citation type="journal article" date="2012" name="Biochem. Biophys. Res. Commun.">
        <title>Arg305 of Streptomyces L-glutamate oxidase plays a crucial role for substrate recognition.</title>
        <authorList>
            <person name="Utsumi T."/>
            <person name="Arima J."/>
            <person name="Sakaguchi C."/>
            <person name="Tamura T."/>
            <person name="Sasaki C."/>
            <person name="Kusakabe H."/>
            <person name="Sugio S."/>
            <person name="Inagaki K."/>
        </authorList>
    </citation>
    <scope>FUNCTION</scope>
    <scope>CATALYTIC ACTIVITY</scope>
    <scope>BIOPHYSICOCHEMICAL PROPERTIES</scope>
    <scope>MUTAGENESIS OF ARG-305; HIS-312 AND TRP-564</scope>
    <source>
        <strain>X-119-6</strain>
    </source>
</reference>
<reference evidence="11" key="4">
    <citation type="journal article" date="2009" name="FEBS J.">
        <title>Structural characterization of L-glutamate oxidase from Streptomyces sp. X-119-6.</title>
        <authorList>
            <person name="Arima J."/>
            <person name="Sasaki C."/>
            <person name="Sakaguchi C."/>
            <person name="Mizuno H."/>
            <person name="Tamura T."/>
            <person name="Kashima A."/>
            <person name="Kusakabe H."/>
            <person name="Sugio S."/>
            <person name="Inagaki K."/>
        </authorList>
    </citation>
    <scope>X-RAY CRYSTALLOGRAPHY (2.80 ANGSTROMS) OF 15-390; 391-520 AND 521-701 IN COMPLEX WITH FAD</scope>
    <scope>COFACTOR</scope>
    <scope>SUBUNIT</scope>
    <scope>DOMAIN</scope>
    <scope>PROTEOLYTIC CLEAVAGE</scope>
    <source>
        <strain>X-119-6</strain>
    </source>
</reference>
<reference evidence="12 13" key="5">
    <citation type="journal article" date="2021" name="Protein Sci.">
        <title>A new L-arginine oxidase engineered from L-glutamate oxidase.</title>
        <authorList>
            <person name="Yano Y."/>
            <person name="Matsuo S."/>
            <person name="Ito N."/>
            <person name="Tamura T."/>
            <person name="Kusakabe H."/>
            <person name="Inagaki K."/>
            <person name="Imada K."/>
        </authorList>
    </citation>
    <scope>X-RAY CRYSTALLOGRAPHY (2.65 ANGSTROMS) OF 16-701 OF MUTANT GLU-305 IN COMPLEXES WITH FAD AND L-ARGININE</scope>
    <scope>BIOTECHNOLOGY</scope>
    <scope>MUTAGENESIS OF ARG-305</scope>
</reference>